<protein>
    <recommendedName>
        <fullName evidence="1">Glycine cleavage system H protein</fullName>
    </recommendedName>
</protein>
<gene>
    <name evidence="1" type="primary">gcvH</name>
    <name type="ordered locus">XOO1795</name>
</gene>
<keyword id="KW-0450">Lipoyl</keyword>
<keyword id="KW-1185">Reference proteome</keyword>
<dbReference type="EMBL" id="AE013598">
    <property type="protein sequence ID" value="AAW75049.1"/>
    <property type="molecule type" value="Genomic_DNA"/>
</dbReference>
<dbReference type="SMR" id="Q5H1X2"/>
<dbReference type="STRING" id="291331.XOO1795"/>
<dbReference type="KEGG" id="xoo:XOO1795"/>
<dbReference type="HOGENOM" id="CLU_097408_2_2_6"/>
<dbReference type="Proteomes" id="UP000006735">
    <property type="component" value="Chromosome"/>
</dbReference>
<dbReference type="GO" id="GO:0005829">
    <property type="term" value="C:cytosol"/>
    <property type="evidence" value="ECO:0007669"/>
    <property type="project" value="TreeGrafter"/>
</dbReference>
<dbReference type="GO" id="GO:0005960">
    <property type="term" value="C:glycine cleavage complex"/>
    <property type="evidence" value="ECO:0007669"/>
    <property type="project" value="InterPro"/>
</dbReference>
<dbReference type="GO" id="GO:0019464">
    <property type="term" value="P:glycine decarboxylation via glycine cleavage system"/>
    <property type="evidence" value="ECO:0007669"/>
    <property type="project" value="UniProtKB-UniRule"/>
</dbReference>
<dbReference type="CDD" id="cd06848">
    <property type="entry name" value="GCS_H"/>
    <property type="match status" value="1"/>
</dbReference>
<dbReference type="Gene3D" id="2.40.50.100">
    <property type="match status" value="1"/>
</dbReference>
<dbReference type="HAMAP" id="MF_00272">
    <property type="entry name" value="GcvH"/>
    <property type="match status" value="1"/>
</dbReference>
<dbReference type="InterPro" id="IPR003016">
    <property type="entry name" value="2-oxoA_DH_lipoyl-BS"/>
</dbReference>
<dbReference type="InterPro" id="IPR000089">
    <property type="entry name" value="Biotin_lipoyl"/>
</dbReference>
<dbReference type="InterPro" id="IPR002930">
    <property type="entry name" value="GCV_H"/>
</dbReference>
<dbReference type="InterPro" id="IPR033753">
    <property type="entry name" value="GCV_H/Fam206"/>
</dbReference>
<dbReference type="InterPro" id="IPR017453">
    <property type="entry name" value="GCV_H_sub"/>
</dbReference>
<dbReference type="InterPro" id="IPR011053">
    <property type="entry name" value="Single_hybrid_motif"/>
</dbReference>
<dbReference type="NCBIfam" id="TIGR00527">
    <property type="entry name" value="gcvH"/>
    <property type="match status" value="1"/>
</dbReference>
<dbReference type="NCBIfam" id="NF002270">
    <property type="entry name" value="PRK01202.1"/>
    <property type="match status" value="1"/>
</dbReference>
<dbReference type="PANTHER" id="PTHR11715">
    <property type="entry name" value="GLYCINE CLEAVAGE SYSTEM H PROTEIN"/>
    <property type="match status" value="1"/>
</dbReference>
<dbReference type="PANTHER" id="PTHR11715:SF3">
    <property type="entry name" value="GLYCINE CLEAVAGE SYSTEM H PROTEIN-RELATED"/>
    <property type="match status" value="1"/>
</dbReference>
<dbReference type="Pfam" id="PF01597">
    <property type="entry name" value="GCV_H"/>
    <property type="match status" value="1"/>
</dbReference>
<dbReference type="SUPFAM" id="SSF51230">
    <property type="entry name" value="Single hybrid motif"/>
    <property type="match status" value="1"/>
</dbReference>
<dbReference type="PROSITE" id="PS50968">
    <property type="entry name" value="BIOTINYL_LIPOYL"/>
    <property type="match status" value="1"/>
</dbReference>
<dbReference type="PROSITE" id="PS00189">
    <property type="entry name" value="LIPOYL"/>
    <property type="match status" value="1"/>
</dbReference>
<name>GCSH_XANOR</name>
<proteinExistence type="inferred from homology"/>
<evidence type="ECO:0000255" key="1">
    <source>
        <dbReference type="HAMAP-Rule" id="MF_00272"/>
    </source>
</evidence>
<evidence type="ECO:0000255" key="2">
    <source>
        <dbReference type="PROSITE-ProRule" id="PRU01066"/>
    </source>
</evidence>
<comment type="function">
    <text evidence="1">The glycine cleavage system catalyzes the degradation of glycine. The H protein shuttles the methylamine group of glycine from the P protein to the T protein.</text>
</comment>
<comment type="cofactor">
    <cofactor evidence="1">
        <name>(R)-lipoate</name>
        <dbReference type="ChEBI" id="CHEBI:83088"/>
    </cofactor>
    <text evidence="1">Binds 1 lipoyl cofactor covalently.</text>
</comment>
<comment type="subunit">
    <text evidence="1">The glycine cleavage system is composed of four proteins: P, T, L and H.</text>
</comment>
<comment type="similarity">
    <text evidence="1">Belongs to the GcvH family.</text>
</comment>
<reference key="1">
    <citation type="journal article" date="2005" name="Nucleic Acids Res.">
        <title>The genome sequence of Xanthomonas oryzae pathovar oryzae KACC10331, the bacterial blight pathogen of rice.</title>
        <authorList>
            <person name="Lee B.-M."/>
            <person name="Park Y.-J."/>
            <person name="Park D.-S."/>
            <person name="Kang H.-W."/>
            <person name="Kim J.-G."/>
            <person name="Song E.-S."/>
            <person name="Park I.-C."/>
            <person name="Yoon U.-H."/>
            <person name="Hahn J.-H."/>
            <person name="Koo B.-S."/>
            <person name="Lee G.-B."/>
            <person name="Kim H."/>
            <person name="Park H.-S."/>
            <person name="Yoon K.-O."/>
            <person name="Kim J.-H."/>
            <person name="Jung C.-H."/>
            <person name="Koh N.-H."/>
            <person name="Seo J.-S."/>
            <person name="Go S.-J."/>
        </authorList>
    </citation>
    <scope>NUCLEOTIDE SEQUENCE [LARGE SCALE GENOMIC DNA]</scope>
    <source>
        <strain>KACC10331 / KXO85</strain>
    </source>
</reference>
<accession>Q5H1X2</accession>
<feature type="chain" id="PRO_0000302464" description="Glycine cleavage system H protein">
    <location>
        <begin position="1"/>
        <end position="131"/>
    </location>
</feature>
<feature type="domain" description="Lipoyl-binding" evidence="2">
    <location>
        <begin position="24"/>
        <end position="106"/>
    </location>
</feature>
<feature type="modified residue" description="N6-lipoyllysine" evidence="1">
    <location>
        <position position="65"/>
    </location>
</feature>
<organism>
    <name type="scientific">Xanthomonas oryzae pv. oryzae (strain KACC10331 / KXO85)</name>
    <dbReference type="NCBI Taxonomy" id="291331"/>
    <lineage>
        <taxon>Bacteria</taxon>
        <taxon>Pseudomonadati</taxon>
        <taxon>Pseudomonadota</taxon>
        <taxon>Gammaproteobacteria</taxon>
        <taxon>Lysobacterales</taxon>
        <taxon>Lysobacteraceae</taxon>
        <taxon>Xanthomonas</taxon>
    </lineage>
</organism>
<sequence>MSEIPGDLKFLKSHEWARIESNGRVTVGISDHAQGLLGDLVYVELPGVGDTVQVGNGAAVVESVKAASDVYSPVSGTVVEVNSALSDKPETINEDAYGEGWIFVVEIDDKEQLNDLLDPDDYAELLEDDEH</sequence>